<reference key="1">
    <citation type="journal article" date="2006" name="Biochemistry">
        <title>Definition and characterization of the short alphaA-conotoxins: a single residue determines dissociation kinetics from the fetal muscle nicotinic acetylcholine receptor.</title>
        <authorList>
            <person name="Teichert R.W."/>
            <person name="Lopez-Vera E."/>
            <person name="Gulyas J."/>
            <person name="Watkins M."/>
            <person name="Rivier J."/>
            <person name="Olivera B.M."/>
        </authorList>
    </citation>
    <scope>NUCLEOTIDE SEQUENCE [GENOMIC DNA]</scope>
    <scope>SYNTHESIS</scope>
    <scope>FUNCTION</scope>
</reference>
<accession>P0C1W9</accession>
<dbReference type="ConoServer" id="1689">
    <property type="toxin name" value="PeIVA"/>
</dbReference>
<dbReference type="GO" id="GO:0005576">
    <property type="term" value="C:extracellular region"/>
    <property type="evidence" value="ECO:0007669"/>
    <property type="project" value="UniProtKB-SubCell"/>
</dbReference>
<dbReference type="GO" id="GO:0035792">
    <property type="term" value="C:host cell postsynaptic membrane"/>
    <property type="evidence" value="ECO:0007669"/>
    <property type="project" value="UniProtKB-KW"/>
</dbReference>
<dbReference type="GO" id="GO:0030550">
    <property type="term" value="F:acetylcholine receptor inhibitor activity"/>
    <property type="evidence" value="ECO:0007669"/>
    <property type="project" value="UniProtKB-KW"/>
</dbReference>
<dbReference type="GO" id="GO:0099106">
    <property type="term" value="F:ion channel regulator activity"/>
    <property type="evidence" value="ECO:0007669"/>
    <property type="project" value="UniProtKB-KW"/>
</dbReference>
<dbReference type="GO" id="GO:0090729">
    <property type="term" value="F:toxin activity"/>
    <property type="evidence" value="ECO:0007669"/>
    <property type="project" value="UniProtKB-KW"/>
</dbReference>
<name>CA4A_CONPR</name>
<protein>
    <recommendedName>
        <fullName>Alpha-conotoxin PeIVA</fullName>
    </recommendedName>
</protein>
<organism>
    <name type="scientific">Conus pergrandis</name>
    <name type="common">Grand cone</name>
    <dbReference type="NCBI Taxonomy" id="330676"/>
    <lineage>
        <taxon>Eukaryota</taxon>
        <taxon>Metazoa</taxon>
        <taxon>Spiralia</taxon>
        <taxon>Lophotrochozoa</taxon>
        <taxon>Mollusca</taxon>
        <taxon>Gastropoda</taxon>
        <taxon>Caenogastropoda</taxon>
        <taxon>Neogastropoda</taxon>
        <taxon>Conoidea</taxon>
        <taxon>Conidae</taxon>
        <taxon>Conus</taxon>
        <taxon>Embrikena</taxon>
    </lineage>
</organism>
<comment type="function">
    <text evidence="2">Alpha-conotoxins act on postsynaptic membranes, they bind to the nicotinic acetylcholine receptors (nAChR) and thus inhibit them. This toxin has higher affinity for the fetal (alpha-1/beta-1/gamma/delta subunits) subtype (IC(50)=&lt;5 nM) of the receptor than for the adult (alpha-1/beta-1/epsilon/delta) subtype (IC(50)=4000 nM). It blocks the elicited currents completely and dissociates very slowly from the fetal muscle receptor.</text>
</comment>
<comment type="subcellular location">
    <subcellularLocation>
        <location>Secreted</location>
    </subcellularLocation>
</comment>
<comment type="tissue specificity">
    <text>Expressed by the venom duct.</text>
</comment>
<comment type="domain">
    <text>The cysteine framework is IV (CC-C-C-C-C).</text>
</comment>
<comment type="PTM">
    <text evidence="1">Contains 3 disulfide bonds (By similarity). They are not added, since framework IV presents two different connectivities (I-V, II-III, IV-VI and I-III, II-V, IV-VI).</text>
</comment>
<comment type="similarity">
    <text evidence="3">Belongs to the conotoxin A superfamily.</text>
</comment>
<sequence length="18" mass="1766">CCGVPNAACHPCVCTGKC</sequence>
<feature type="peptide" id="PRO_0000249798" description="Alpha-conotoxin PeIVA">
    <location>
        <begin position="1"/>
        <end position="18"/>
    </location>
</feature>
<feature type="modified residue" description="4-hydroxyproline" evidence="1">
    <location>
        <position position="5"/>
    </location>
</feature>
<feature type="modified residue" description="4-hydroxyproline" evidence="1">
    <location>
        <position position="11"/>
    </location>
</feature>
<keyword id="KW-0008">Acetylcholine receptor inhibiting toxin</keyword>
<keyword id="KW-1015">Disulfide bond</keyword>
<keyword id="KW-0379">Hydroxylation</keyword>
<keyword id="KW-0872">Ion channel impairing toxin</keyword>
<keyword id="KW-0528">Neurotoxin</keyword>
<keyword id="KW-0629">Postsynaptic neurotoxin</keyword>
<keyword id="KW-0964">Secreted</keyword>
<keyword id="KW-0800">Toxin</keyword>
<proteinExistence type="inferred from homology"/>
<evidence type="ECO:0000250" key="1"/>
<evidence type="ECO:0000269" key="2">
    <source>
    </source>
</evidence>
<evidence type="ECO:0000305" key="3"/>